<organism>
    <name type="scientific">Guillardia theta</name>
    <name type="common">Cryptophyte</name>
    <name type="synonym">Cryptomonas phi</name>
    <dbReference type="NCBI Taxonomy" id="55529"/>
    <lineage>
        <taxon>Eukaryota</taxon>
        <taxon>Cryptophyceae</taxon>
        <taxon>Pyrenomonadales</taxon>
        <taxon>Geminigeraceae</taxon>
        <taxon>Guillardia</taxon>
    </lineage>
</organism>
<sequence length="45" mass="5036">MEGILFLAKLPEAYAIFKPIIDVAPVIPVFFLLLAFVWQAAVGFR</sequence>
<evidence type="ECO:0000255" key="1">
    <source>
        <dbReference type="HAMAP-Rule" id="MF_00441"/>
    </source>
</evidence>
<name>PSBK_GUITH</name>
<accession>O78504</accession>
<reference key="1">
    <citation type="journal article" date="1999" name="J. Mol. Evol.">
        <title>The plastid genome of the cryptophyte alga, Guillardia theta: complete sequence and conserved synteny groups confirm its common ancestry with red algae.</title>
        <authorList>
            <person name="Douglas S.E."/>
            <person name="Penny S.L."/>
        </authorList>
    </citation>
    <scope>NUCLEOTIDE SEQUENCE [LARGE SCALE GENOMIC DNA]</scope>
</reference>
<proteinExistence type="inferred from homology"/>
<dbReference type="EMBL" id="AF041468">
    <property type="protein sequence ID" value="AAC35695.1"/>
    <property type="molecule type" value="Genomic_DNA"/>
</dbReference>
<dbReference type="RefSeq" id="NP_050761.1">
    <property type="nucleotide sequence ID" value="NC_000926.1"/>
</dbReference>
<dbReference type="SMR" id="O78504"/>
<dbReference type="GeneID" id="857069"/>
<dbReference type="HOGENOM" id="CLU_174355_0_0_1"/>
<dbReference type="GO" id="GO:0009535">
    <property type="term" value="C:chloroplast thylakoid membrane"/>
    <property type="evidence" value="ECO:0007669"/>
    <property type="project" value="UniProtKB-SubCell"/>
</dbReference>
<dbReference type="GO" id="GO:0009539">
    <property type="term" value="C:photosystem II reaction center"/>
    <property type="evidence" value="ECO:0007669"/>
    <property type="project" value="InterPro"/>
</dbReference>
<dbReference type="GO" id="GO:0015979">
    <property type="term" value="P:photosynthesis"/>
    <property type="evidence" value="ECO:0007669"/>
    <property type="project" value="UniProtKB-UniRule"/>
</dbReference>
<dbReference type="HAMAP" id="MF_00441">
    <property type="entry name" value="PSII_PsbK"/>
    <property type="match status" value="1"/>
</dbReference>
<dbReference type="InterPro" id="IPR003687">
    <property type="entry name" value="PSII_PsbK"/>
</dbReference>
<dbReference type="InterPro" id="IPR037270">
    <property type="entry name" value="PSII_PsbK_sf"/>
</dbReference>
<dbReference type="NCBIfam" id="NF002715">
    <property type="entry name" value="PRK02553.1"/>
    <property type="match status" value="1"/>
</dbReference>
<dbReference type="PANTHER" id="PTHR35325">
    <property type="match status" value="1"/>
</dbReference>
<dbReference type="PANTHER" id="PTHR35325:SF1">
    <property type="entry name" value="PHOTOSYSTEM II REACTION CENTER PROTEIN K"/>
    <property type="match status" value="1"/>
</dbReference>
<dbReference type="Pfam" id="PF02533">
    <property type="entry name" value="PsbK"/>
    <property type="match status" value="1"/>
</dbReference>
<dbReference type="SUPFAM" id="SSF161037">
    <property type="entry name" value="Photosystem II reaction center protein K, PsbK"/>
    <property type="match status" value="1"/>
</dbReference>
<gene>
    <name evidence="1" type="primary">psbK</name>
</gene>
<comment type="function">
    <text evidence="1">One of the components of the core complex of photosystem II (PSII). PSII is a light-driven water:plastoquinone oxidoreductase that uses light energy to abstract electrons from H(2)O, generating O(2) and a proton gradient subsequently used for ATP formation. It consists of a core antenna complex that captures photons, and an electron transfer chain that converts photonic excitation into a charge separation.</text>
</comment>
<comment type="subunit">
    <text evidence="1">PSII is composed of 1 copy each of membrane proteins PsbA, PsbB, PsbC, PsbD, PsbE, PsbF, PsbH, PsbI, PsbJ, PsbK, PsbL, PsbM, PsbT, PsbX, PsbY, PsbZ, Psb30/Ycf12, at least 3 peripheral proteins of the oxygen-evolving complex and a large number of cofactors. It forms dimeric complexes.</text>
</comment>
<comment type="subcellular location">
    <subcellularLocation>
        <location evidence="1">Plastid</location>
        <location evidence="1">Chloroplast thylakoid membrane</location>
        <topology evidence="1">Single-pass membrane protein</topology>
    </subcellularLocation>
</comment>
<comment type="similarity">
    <text evidence="1">Belongs to the PsbK family.</text>
</comment>
<protein>
    <recommendedName>
        <fullName evidence="1">Photosystem II reaction center protein K</fullName>
        <shortName evidence="1">PSII-K</shortName>
    </recommendedName>
</protein>
<feature type="propeptide" id="PRO_0000029473" evidence="1">
    <location>
        <begin position="1"/>
        <end position="8"/>
    </location>
</feature>
<feature type="chain" id="PRO_0000029474" description="Photosystem II reaction center protein K" evidence="1">
    <location>
        <begin position="9"/>
        <end position="45"/>
    </location>
</feature>
<feature type="transmembrane region" description="Helical" evidence="1">
    <location>
        <begin position="24"/>
        <end position="44"/>
    </location>
</feature>
<geneLocation type="chloroplast"/>
<keyword id="KW-0150">Chloroplast</keyword>
<keyword id="KW-0472">Membrane</keyword>
<keyword id="KW-0602">Photosynthesis</keyword>
<keyword id="KW-0604">Photosystem II</keyword>
<keyword id="KW-0934">Plastid</keyword>
<keyword id="KW-0674">Reaction center</keyword>
<keyword id="KW-0793">Thylakoid</keyword>
<keyword id="KW-0812">Transmembrane</keyword>
<keyword id="KW-1133">Transmembrane helix</keyword>